<reference key="1">
    <citation type="journal article" date="2005" name="BMC Genomics">
        <title>Characterization of 954 bovine full-CDS cDNA sequences.</title>
        <authorList>
            <person name="Harhay G.P."/>
            <person name="Sonstegard T.S."/>
            <person name="Keele J.W."/>
            <person name="Heaton M.P."/>
            <person name="Clawson M.L."/>
            <person name="Snelling W.M."/>
            <person name="Wiedmann R.T."/>
            <person name="Van Tassell C.P."/>
            <person name="Smith T.P.L."/>
        </authorList>
    </citation>
    <scope>NUCLEOTIDE SEQUENCE [LARGE SCALE MRNA] (ISOFORM 2)</scope>
</reference>
<reference key="2">
    <citation type="submission" date="2005-03" db="EMBL/GenBank/DDBJ databases">
        <title>Construction and analysis of a cDNA library generated from intestinal muscle and epithelial tissues of Holstein cattle.</title>
        <authorList>
            <person name="Baumann R.G."/>
            <person name="Baldwin R.L."/>
            <person name="Sonstegard T.S."/>
            <person name="Van Tassell C.P."/>
            <person name="Matukumalli L.K."/>
        </authorList>
    </citation>
    <scope>NUCLEOTIDE SEQUENCE [LARGE SCALE MRNA] OF 440-631 (ISOFORM 1)</scope>
</reference>
<reference key="3">
    <citation type="submission" date="2006-03" db="EMBL/GenBank/DDBJ databases">
        <title>Bovine genome sequencing program: full-length cDNA sequencing.</title>
        <authorList>
            <person name="Moore S."/>
            <person name="Alexander L."/>
            <person name="Brownstein M."/>
            <person name="Guan L."/>
            <person name="Lobo S."/>
            <person name="Meng Y."/>
            <person name="Tanaguchi M."/>
            <person name="Wang Z."/>
            <person name="Yu J."/>
            <person name="Prange C."/>
            <person name="Schreiber K."/>
            <person name="Shenmen C."/>
            <person name="Wagner L."/>
            <person name="Bala M."/>
            <person name="Barbazuk S."/>
            <person name="Barber S."/>
            <person name="Babakaiff R."/>
            <person name="Beland J."/>
            <person name="Chun E."/>
            <person name="Del Rio L."/>
            <person name="Gibson S."/>
            <person name="Hanson R."/>
            <person name="Kirkpatrick R."/>
            <person name="Liu J."/>
            <person name="Matsuo C."/>
            <person name="Mayo M."/>
            <person name="Santos R.R."/>
            <person name="Stott J."/>
            <person name="Tsai M."/>
            <person name="Wong D."/>
            <person name="Siddiqui A."/>
            <person name="Holt R."/>
            <person name="Jones S.J."/>
            <person name="Marra M.A."/>
        </authorList>
    </citation>
    <scope>NUCLEOTIDE SEQUENCE [LARGE SCALE MRNA] OF 551-669 (ISOFORM 1)</scope>
</reference>
<protein>
    <recommendedName>
        <fullName>GTP-binding protein 1</fullName>
    </recommendedName>
</protein>
<sequence>MAAERSRSPMESPVPASMFAPEPSSPGAARAAAAAARLHGGFDSDCSEDGEALNGEPELDLTSKLVLVSPTSEQYDSLLRQMWERMDEGCGETIYVIGQGSDGTEYGLSEADMEASYATVKSMAEQIEADVILLRERQEAGGRVRDYLVRKRVGDNDFLEVRVAVVGNVDAGKSTLLGVLTHGELDNGRGFARQKLFRHKHEIESGRTSSVGNDILGFDSEGNVVNKPDSHGGSLEWTKICEKSTKVITFIDLAGHEKYLKTTVFGMTGHLPDFCMLMVGSNAGIVGMTKEHLGLALALNVPVFVVVTKIDMCPANILQETLKLLQRLLKSPGCRKIPVLVQSKDDVIVTASNFSSERMCPIFQISNVTGENLDLLKMFLNLLSPRTSYREEEPAEFQIDDTYSVPGVGTVVSGTTLRGLIKLNDTLLLGPDPLGNFLSIAVKSIHRKRMPVKEVRGGQTASFALKKIKRSSIRKGMVMVSPRLNPQASWEFEAEILVLHHPTTISPRYQAMVHCGSIRQTATILSMDKDCLRTGDKATVHFRFIKTPEYLHIDQRLVFREGRTKAVGTITKLLQTTNNSPMNSKPQQIKMQSTKKGPLPKREEGGPSGGPTVGGPPPGDEACSLGATQLAASSSLQPQPKPSSGGRRRGGQRHKVKSQGACMTPASGC</sequence>
<name>GTPB1_BOVIN</name>
<dbReference type="EMBL" id="BT021672">
    <property type="protein sequence ID" value="AAX46519.1"/>
    <property type="status" value="ALT_INIT"/>
    <property type="molecule type" value="mRNA"/>
</dbReference>
<dbReference type="EMBL" id="CK833772">
    <property type="status" value="NOT_ANNOTATED_CDS"/>
    <property type="molecule type" value="mRNA"/>
</dbReference>
<dbReference type="EMBL" id="DV883035">
    <property type="status" value="NOT_ANNOTATED_CDS"/>
    <property type="molecule type" value="mRNA"/>
</dbReference>
<dbReference type="RefSeq" id="NP_001017938.1">
    <property type="nucleotide sequence ID" value="NM_001017938.1"/>
</dbReference>
<dbReference type="RefSeq" id="XP_005207379.1">
    <molecule id="Q58DC5-1"/>
    <property type="nucleotide sequence ID" value="XM_005207322.5"/>
</dbReference>
<dbReference type="SMR" id="Q58DC5"/>
<dbReference type="FunCoup" id="Q58DC5">
    <property type="interactions" value="3589"/>
</dbReference>
<dbReference type="STRING" id="9913.ENSBTAP00000013635"/>
<dbReference type="PaxDb" id="9913-ENSBTAP00000013635"/>
<dbReference type="Ensembl" id="ENSBTAT00000013635.6">
    <molecule id="Q58DC5-1"/>
    <property type="protein sequence ID" value="ENSBTAP00000013635.4"/>
    <property type="gene ID" value="ENSBTAG00000010324.7"/>
</dbReference>
<dbReference type="GeneID" id="513922"/>
<dbReference type="KEGG" id="bta:513922"/>
<dbReference type="CTD" id="9567"/>
<dbReference type="VEuPathDB" id="HostDB:ENSBTAG00000010324"/>
<dbReference type="eggNOG" id="KOG0463">
    <property type="taxonomic scope" value="Eukaryota"/>
</dbReference>
<dbReference type="GeneTree" id="ENSGT00940000156054"/>
<dbReference type="InParanoid" id="Q58DC5"/>
<dbReference type="OMA" id="FRFIQRP"/>
<dbReference type="OrthoDB" id="248233at2759"/>
<dbReference type="TreeFam" id="TF350446"/>
<dbReference type="Proteomes" id="UP000009136">
    <property type="component" value="Chromosome 5"/>
</dbReference>
<dbReference type="Bgee" id="ENSBTAG00000010324">
    <property type="expression patterns" value="Expressed in retina and 106 other cell types or tissues"/>
</dbReference>
<dbReference type="GO" id="GO:0000177">
    <property type="term" value="C:cytoplasmic exosome (RNase complex)"/>
    <property type="evidence" value="ECO:0000250"/>
    <property type="project" value="UniProtKB"/>
</dbReference>
<dbReference type="GO" id="GO:0005829">
    <property type="term" value="C:cytosol"/>
    <property type="evidence" value="ECO:0000250"/>
    <property type="project" value="UniProtKB"/>
</dbReference>
<dbReference type="GO" id="GO:1904678">
    <property type="term" value="F:alpha-aminoacyl-tRNA binding"/>
    <property type="evidence" value="ECO:0007669"/>
    <property type="project" value="Ensembl"/>
</dbReference>
<dbReference type="GO" id="GO:0005525">
    <property type="term" value="F:GTP binding"/>
    <property type="evidence" value="ECO:0007669"/>
    <property type="project" value="UniProtKB-KW"/>
</dbReference>
<dbReference type="GO" id="GO:0003924">
    <property type="term" value="F:GTPase activity"/>
    <property type="evidence" value="ECO:0000250"/>
    <property type="project" value="UniProtKB"/>
</dbReference>
<dbReference type="GO" id="GO:0003746">
    <property type="term" value="F:translation elongation factor activity"/>
    <property type="evidence" value="ECO:0000318"/>
    <property type="project" value="GO_Central"/>
</dbReference>
<dbReference type="GO" id="GO:0000049">
    <property type="term" value="F:tRNA binding"/>
    <property type="evidence" value="ECO:0007669"/>
    <property type="project" value="Ensembl"/>
</dbReference>
<dbReference type="GO" id="GO:0002181">
    <property type="term" value="P:cytoplasmic translation"/>
    <property type="evidence" value="ECO:0007669"/>
    <property type="project" value="Ensembl"/>
</dbReference>
<dbReference type="GO" id="GO:0046039">
    <property type="term" value="P:GTP metabolic process"/>
    <property type="evidence" value="ECO:0000250"/>
    <property type="project" value="UniProtKB"/>
</dbReference>
<dbReference type="GO" id="GO:0061014">
    <property type="term" value="P:positive regulation of mRNA catabolic process"/>
    <property type="evidence" value="ECO:0000250"/>
    <property type="project" value="UniProtKB"/>
</dbReference>
<dbReference type="GO" id="GO:0006414">
    <property type="term" value="P:translational elongation"/>
    <property type="evidence" value="ECO:0000318"/>
    <property type="project" value="GO_Central"/>
</dbReference>
<dbReference type="CDD" id="cd04165">
    <property type="entry name" value="GTPBP1_like"/>
    <property type="match status" value="1"/>
</dbReference>
<dbReference type="CDD" id="cd03694">
    <property type="entry name" value="GTPBP_II"/>
    <property type="match status" value="1"/>
</dbReference>
<dbReference type="CDD" id="cd03708">
    <property type="entry name" value="GTPBP_III"/>
    <property type="match status" value="1"/>
</dbReference>
<dbReference type="FunFam" id="2.40.30.10:FF:000028">
    <property type="entry name" value="GTP-binding protein 1,-like"/>
    <property type="match status" value="1"/>
</dbReference>
<dbReference type="FunFam" id="2.40.30.10:FF:000014">
    <property type="entry name" value="Probable GTP-binding protein 1"/>
    <property type="match status" value="1"/>
</dbReference>
<dbReference type="FunFam" id="3.40.50.300:FF:000091">
    <property type="entry name" value="Probable GTP-binding protein 1"/>
    <property type="match status" value="1"/>
</dbReference>
<dbReference type="Gene3D" id="3.40.50.300">
    <property type="entry name" value="P-loop containing nucleotide triphosphate hydrolases"/>
    <property type="match status" value="1"/>
</dbReference>
<dbReference type="Gene3D" id="2.40.30.10">
    <property type="entry name" value="Translation factors"/>
    <property type="match status" value="2"/>
</dbReference>
<dbReference type="InterPro" id="IPR050055">
    <property type="entry name" value="EF-Tu_GTPase"/>
</dbReference>
<dbReference type="InterPro" id="IPR004161">
    <property type="entry name" value="EFTu-like_2"/>
</dbReference>
<dbReference type="InterPro" id="IPR035531">
    <property type="entry name" value="GTPBP1-like"/>
</dbReference>
<dbReference type="InterPro" id="IPR027417">
    <property type="entry name" value="P-loop_NTPase"/>
</dbReference>
<dbReference type="InterPro" id="IPR000795">
    <property type="entry name" value="T_Tr_GTP-bd_dom"/>
</dbReference>
<dbReference type="InterPro" id="IPR009000">
    <property type="entry name" value="Transl_B-barrel_sf"/>
</dbReference>
<dbReference type="InterPro" id="IPR009001">
    <property type="entry name" value="Transl_elong_EF1A/Init_IF2_C"/>
</dbReference>
<dbReference type="PANTHER" id="PTHR43721">
    <property type="entry name" value="ELONGATION FACTOR TU-RELATED"/>
    <property type="match status" value="1"/>
</dbReference>
<dbReference type="PANTHER" id="PTHR43721:SF9">
    <property type="entry name" value="GTP-BINDING PROTEIN 1"/>
    <property type="match status" value="1"/>
</dbReference>
<dbReference type="Pfam" id="PF00009">
    <property type="entry name" value="GTP_EFTU"/>
    <property type="match status" value="1"/>
</dbReference>
<dbReference type="Pfam" id="PF03144">
    <property type="entry name" value="GTP_EFTU_D2"/>
    <property type="match status" value="1"/>
</dbReference>
<dbReference type="SUPFAM" id="SSF50465">
    <property type="entry name" value="EF-Tu/eEF-1alpha/eIF2-gamma C-terminal domain"/>
    <property type="match status" value="1"/>
</dbReference>
<dbReference type="SUPFAM" id="SSF52540">
    <property type="entry name" value="P-loop containing nucleoside triphosphate hydrolases"/>
    <property type="match status" value="1"/>
</dbReference>
<dbReference type="SUPFAM" id="SSF50447">
    <property type="entry name" value="Translation proteins"/>
    <property type="match status" value="1"/>
</dbReference>
<dbReference type="PROSITE" id="PS51722">
    <property type="entry name" value="G_TR_2"/>
    <property type="match status" value="1"/>
</dbReference>
<proteinExistence type="evidence at transcript level"/>
<accession>Q58DC5</accession>
<organism>
    <name type="scientific">Bos taurus</name>
    <name type="common">Bovine</name>
    <dbReference type="NCBI Taxonomy" id="9913"/>
    <lineage>
        <taxon>Eukaryota</taxon>
        <taxon>Metazoa</taxon>
        <taxon>Chordata</taxon>
        <taxon>Craniata</taxon>
        <taxon>Vertebrata</taxon>
        <taxon>Euteleostomi</taxon>
        <taxon>Mammalia</taxon>
        <taxon>Eutheria</taxon>
        <taxon>Laurasiatheria</taxon>
        <taxon>Artiodactyla</taxon>
        <taxon>Ruminantia</taxon>
        <taxon>Pecora</taxon>
        <taxon>Bovidae</taxon>
        <taxon>Bovinae</taxon>
        <taxon>Bos</taxon>
    </lineage>
</organism>
<comment type="function">
    <text evidence="1">Promotes degradation of target mRNA species. Plays a role in the regulation of circadian mRNA stability. Binds GTP and has GTPase activity (By similarity).</text>
</comment>
<comment type="subunit">
    <text evidence="1">Interacts with EXOSC2/RRP4, EXOSC3/RRP40, EXOSC5/RRP46, HNRNPD, HNRNPR and SYNCRIP. Identified in a complex with AANAT mRNA, but does not bind mRNA by itself (By similarity).</text>
</comment>
<comment type="subcellular location">
    <subcellularLocation>
        <location evidence="1">Cytoplasm</location>
    </subcellularLocation>
</comment>
<comment type="alternative products">
    <event type="alternative splicing"/>
    <isoform>
        <id>Q58DC5-1</id>
        <name>1</name>
        <sequence type="displayed"/>
    </isoform>
    <isoform>
        <id>Q58DC5-2</id>
        <name>2</name>
        <sequence type="described" ref="VSP_026490 VSP_026491"/>
    </isoform>
</comment>
<comment type="similarity">
    <text evidence="5">Belongs to the TRAFAC class translation factor GTPase superfamily. Classic translation factor GTPase family. GTPBP1 subfamily.</text>
</comment>
<comment type="sequence caution" evidence="8">
    <conflict type="erroneous initiation">
        <sequence resource="EMBL-CDS" id="AAX46519"/>
    </conflict>
</comment>
<evidence type="ECO:0000250" key="1"/>
<evidence type="ECO:0000250" key="2">
    <source>
        <dbReference type="UniProtKB" id="O00178"/>
    </source>
</evidence>
<evidence type="ECO:0000250" key="3">
    <source>
        <dbReference type="UniProtKB" id="O08582"/>
    </source>
</evidence>
<evidence type="ECO:0000255" key="4"/>
<evidence type="ECO:0000255" key="5">
    <source>
        <dbReference type="PROSITE-ProRule" id="PRU01059"/>
    </source>
</evidence>
<evidence type="ECO:0000256" key="6">
    <source>
        <dbReference type="SAM" id="MobiDB-lite"/>
    </source>
</evidence>
<evidence type="ECO:0000303" key="7">
    <source>
    </source>
</evidence>
<evidence type="ECO:0000305" key="8"/>
<gene>
    <name type="primary">GTPBP1</name>
</gene>
<keyword id="KW-0025">Alternative splicing</keyword>
<keyword id="KW-0963">Cytoplasm</keyword>
<keyword id="KW-0342">GTP-binding</keyword>
<keyword id="KW-0547">Nucleotide-binding</keyword>
<keyword id="KW-0597">Phosphoprotein</keyword>
<keyword id="KW-1185">Reference proteome</keyword>
<feature type="chain" id="PRO_0000293472" description="GTP-binding protein 1">
    <location>
        <begin position="1"/>
        <end position="669"/>
    </location>
</feature>
<feature type="domain" description="tr-type G" evidence="5">
    <location>
        <begin position="158"/>
        <end position="389"/>
    </location>
</feature>
<feature type="region of interest" description="Disordered" evidence="6">
    <location>
        <begin position="1"/>
        <end position="32"/>
    </location>
</feature>
<feature type="region of interest" description="G1" evidence="5">
    <location>
        <begin position="167"/>
        <end position="174"/>
    </location>
</feature>
<feature type="region of interest" description="G2" evidence="5">
    <location>
        <begin position="206"/>
        <end position="210"/>
    </location>
</feature>
<feature type="region of interest" description="G3" evidence="5">
    <location>
        <begin position="252"/>
        <end position="255"/>
    </location>
</feature>
<feature type="region of interest" description="G4" evidence="5">
    <location>
        <begin position="308"/>
        <end position="311"/>
    </location>
</feature>
<feature type="region of interest" description="G5" evidence="5">
    <location>
        <begin position="366"/>
        <end position="368"/>
    </location>
</feature>
<feature type="region of interest" description="Disordered" evidence="6">
    <location>
        <begin position="573"/>
        <end position="669"/>
    </location>
</feature>
<feature type="compositionally biased region" description="Polar residues" evidence="6">
    <location>
        <begin position="573"/>
        <end position="595"/>
    </location>
</feature>
<feature type="compositionally biased region" description="Low complexity" evidence="6">
    <location>
        <begin position="633"/>
        <end position="645"/>
    </location>
</feature>
<feature type="compositionally biased region" description="Basic residues" evidence="6">
    <location>
        <begin position="646"/>
        <end position="657"/>
    </location>
</feature>
<feature type="binding site" evidence="4">
    <location>
        <begin position="167"/>
        <end position="174"/>
    </location>
    <ligand>
        <name>GTP</name>
        <dbReference type="ChEBI" id="CHEBI:37565"/>
    </ligand>
</feature>
<feature type="binding site" evidence="4">
    <location>
        <begin position="252"/>
        <end position="256"/>
    </location>
    <ligand>
        <name>GTP</name>
        <dbReference type="ChEBI" id="CHEBI:37565"/>
    </ligand>
</feature>
<feature type="binding site" evidence="4">
    <location>
        <begin position="308"/>
        <end position="311"/>
    </location>
    <ligand>
        <name>GTP</name>
        <dbReference type="ChEBI" id="CHEBI:37565"/>
    </ligand>
</feature>
<feature type="modified residue" description="Phosphoserine" evidence="3">
    <location>
        <position position="6"/>
    </location>
</feature>
<feature type="modified residue" description="Phosphoserine" evidence="3">
    <location>
        <position position="8"/>
    </location>
</feature>
<feature type="modified residue" description="Phosphoserine" evidence="2">
    <location>
        <position position="12"/>
    </location>
</feature>
<feature type="modified residue" description="Phosphoserine" evidence="3">
    <location>
        <position position="24"/>
    </location>
</feature>
<feature type="modified residue" description="Phosphoserine" evidence="2">
    <location>
        <position position="25"/>
    </location>
</feature>
<feature type="modified residue" description="Phosphoserine" evidence="2">
    <location>
        <position position="44"/>
    </location>
</feature>
<feature type="modified residue" description="Phosphoserine" evidence="2">
    <location>
        <position position="47"/>
    </location>
</feature>
<feature type="modified residue" description="Phosphoserine" evidence="2">
    <location>
        <position position="69"/>
    </location>
</feature>
<feature type="modified residue" description="Phosphoserine" evidence="2">
    <location>
        <position position="580"/>
    </location>
</feature>
<feature type="splice variant" id="VSP_026490" description="In isoform 2." evidence="7">
    <original>NNSPMNSKPQQIKMQSTKKGPLPKRE</original>
    <variation>SPPSPTLHHSSCVQTTGPLSSPPSNY</variation>
    <location>
        <begin position="578"/>
        <end position="603"/>
    </location>
</feature>
<feature type="splice variant" id="VSP_026491" description="In isoform 2." evidence="7">
    <location>
        <begin position="604"/>
        <end position="669"/>
    </location>
</feature>